<keyword id="KW-0165">Cleavage on pair of basic residues</keyword>
<keyword id="KW-1015">Disulfide bond</keyword>
<keyword id="KW-0372">Hormone</keyword>
<keyword id="KW-1185">Reference proteome</keyword>
<keyword id="KW-0964">Secreted</keyword>
<keyword id="KW-0732">Signal</keyword>
<sequence length="191" mass="22215">MKQLCCSCLLWLGLLLTPFSREEEEESRPRKLCGRHLLIEVIKLCGQSDWSRFEMEEQSPMTQFFPHYSRKGKAFNPHPSSSAWRRFTNPVPAGVSQKKGTHTWEPQSLPDYQFEKTELLPKARVFSYHSGKPYVKSVQLQKKSTNKMNTFRSLFWGNHSQRKRRGFADKCCVIGCTKEEMAVACLPFVDF</sequence>
<feature type="signal peptide" evidence="2">
    <location>
        <begin position="1"/>
        <end position="22"/>
    </location>
</feature>
<feature type="chain" id="PRO_0000016177" description="Insulin-like peptide INSL6">
    <location>
        <begin position="23"/>
        <end position="191"/>
    </location>
</feature>
<feature type="peptide" id="PRO_0000016178" description="Insulin-like peptide INSL6 B chain" evidence="2">
    <location>
        <begin position="23"/>
        <end position="51"/>
    </location>
</feature>
<feature type="propeptide" id="PRO_0000016179" description="Connecting peptide" evidence="2">
    <location>
        <begin position="53"/>
        <end position="161"/>
    </location>
</feature>
<feature type="peptide" id="PRO_0000016180" description="Insulin-like peptide INSL6 A chain" evidence="2">
    <location>
        <begin position="166"/>
        <end position="191"/>
    </location>
</feature>
<feature type="disulfide bond" evidence="1">
    <location>
        <begin position="33"/>
        <end position="172"/>
    </location>
</feature>
<feature type="disulfide bond" evidence="1">
    <location>
        <begin position="45"/>
        <end position="185"/>
    </location>
</feature>
<feature type="disulfide bond" evidence="1">
    <location>
        <begin position="171"/>
        <end position="176"/>
    </location>
</feature>
<reference key="1">
    <citation type="journal article" date="2000" name="Endocrinology">
        <title>Identification, chromosomal mapping, and partial characterization of mouse Insl6: a new member of the insulin family.</title>
        <authorList>
            <person name="Kasik J."/>
            <person name="Muglia L."/>
            <person name="Stephan D.A."/>
            <person name="Menon R.K."/>
        </authorList>
    </citation>
    <scope>NUCLEOTIDE SEQUENCE [MRNA]</scope>
    <source>
        <strain>FBV/N</strain>
    </source>
</reference>
<reference key="2">
    <citation type="journal article" date="2004" name="Genome Res.">
        <title>The status, quality, and expansion of the NIH full-length cDNA project: the Mammalian Gene Collection (MGC).</title>
        <authorList>
            <consortium name="The MGC Project Team"/>
        </authorList>
    </citation>
    <scope>NUCLEOTIDE SEQUENCE [LARGE SCALE MRNA]</scope>
    <source>
        <strain>C57BL/6J</strain>
        <tissue>Thymus</tissue>
    </source>
</reference>
<accession>Q9QY05</accession>
<gene>
    <name type="primary">Insl6</name>
</gene>
<comment type="function">
    <text>May have a role in sperm development and fertilization.</text>
</comment>
<comment type="subcellular location">
    <subcellularLocation>
        <location evidence="1">Secreted</location>
    </subcellularLocation>
</comment>
<comment type="similarity">
    <text evidence="3">Belongs to the insulin family.</text>
</comment>
<organism>
    <name type="scientific">Mus musculus</name>
    <name type="common">Mouse</name>
    <dbReference type="NCBI Taxonomy" id="10090"/>
    <lineage>
        <taxon>Eukaryota</taxon>
        <taxon>Metazoa</taxon>
        <taxon>Chordata</taxon>
        <taxon>Craniata</taxon>
        <taxon>Vertebrata</taxon>
        <taxon>Euteleostomi</taxon>
        <taxon>Mammalia</taxon>
        <taxon>Eutheria</taxon>
        <taxon>Euarchontoglires</taxon>
        <taxon>Glires</taxon>
        <taxon>Rodentia</taxon>
        <taxon>Myomorpha</taxon>
        <taxon>Muroidea</taxon>
        <taxon>Muridae</taxon>
        <taxon>Murinae</taxon>
        <taxon>Mus</taxon>
        <taxon>Mus</taxon>
    </lineage>
</organism>
<protein>
    <recommendedName>
        <fullName>Insulin-like peptide INSL6</fullName>
        <shortName>Insulin-like peptide 6</shortName>
    </recommendedName>
    <component>
        <recommendedName>
            <fullName>Insulin-like peptide INSL6 B chain</fullName>
        </recommendedName>
    </component>
    <component>
        <recommendedName>
            <fullName>Insulin-like peptide INSL6 A chain</fullName>
        </recommendedName>
    </component>
</protein>
<dbReference type="EMBL" id="AF143807">
    <property type="protein sequence ID" value="AAD30158.2"/>
    <property type="molecule type" value="mRNA"/>
</dbReference>
<dbReference type="EMBL" id="BC028752">
    <property type="protein sequence ID" value="AAH28752.1"/>
    <property type="molecule type" value="mRNA"/>
</dbReference>
<dbReference type="CCDS" id="CCDS29732.1"/>
<dbReference type="RefSeq" id="NP_038782.1">
    <property type="nucleotide sequence ID" value="NM_013754.1"/>
</dbReference>
<dbReference type="SMR" id="Q9QY05"/>
<dbReference type="FunCoup" id="Q9QY05">
    <property type="interactions" value="8"/>
</dbReference>
<dbReference type="STRING" id="10090.ENSMUSP00000054488"/>
<dbReference type="iPTMnet" id="Q9QY05"/>
<dbReference type="PhosphoSitePlus" id="Q9QY05"/>
<dbReference type="PaxDb" id="10090-ENSMUSP00000054488"/>
<dbReference type="ProteomicsDB" id="266995"/>
<dbReference type="Antibodypedia" id="9538">
    <property type="antibodies" value="40 antibodies from 14 providers"/>
</dbReference>
<dbReference type="DNASU" id="27356"/>
<dbReference type="Ensembl" id="ENSMUST00000052380.5">
    <property type="protein sequence ID" value="ENSMUSP00000054488.4"/>
    <property type="gene ID" value="ENSMUSG00000050957.5"/>
</dbReference>
<dbReference type="GeneID" id="27356"/>
<dbReference type="KEGG" id="mmu:27356"/>
<dbReference type="UCSC" id="uc008hdd.1">
    <property type="organism name" value="mouse"/>
</dbReference>
<dbReference type="AGR" id="MGI:1351595"/>
<dbReference type="CTD" id="11172"/>
<dbReference type="MGI" id="MGI:1351595">
    <property type="gene designation" value="Insl6"/>
</dbReference>
<dbReference type="VEuPathDB" id="HostDB:ENSMUSG00000050957"/>
<dbReference type="eggNOG" id="ENOG502RWPT">
    <property type="taxonomic scope" value="Eukaryota"/>
</dbReference>
<dbReference type="GeneTree" id="ENSGT00940000154434"/>
<dbReference type="HOGENOM" id="CLU_1299356_0_0_1"/>
<dbReference type="InParanoid" id="Q9QY05"/>
<dbReference type="OMA" id="SIACFPY"/>
<dbReference type="OrthoDB" id="9659760at2759"/>
<dbReference type="PhylomeDB" id="Q9QY05"/>
<dbReference type="TreeFam" id="TF343788"/>
<dbReference type="BioGRID-ORCS" id="27356">
    <property type="hits" value="0 hits in 77 CRISPR screens"/>
</dbReference>
<dbReference type="ChiTaRS" id="Insl6">
    <property type="organism name" value="mouse"/>
</dbReference>
<dbReference type="PRO" id="PR:Q9QY05"/>
<dbReference type="Proteomes" id="UP000000589">
    <property type="component" value="Chromosome 19"/>
</dbReference>
<dbReference type="RNAct" id="Q9QY05">
    <property type="molecule type" value="protein"/>
</dbReference>
<dbReference type="Bgee" id="ENSMUSG00000050957">
    <property type="expression patterns" value="Expressed in seminiferous tubule of testis and 118 other cell types or tissues"/>
</dbReference>
<dbReference type="ExpressionAtlas" id="Q9QY05">
    <property type="expression patterns" value="baseline and differential"/>
</dbReference>
<dbReference type="GO" id="GO:0005576">
    <property type="term" value="C:extracellular region"/>
    <property type="evidence" value="ECO:0007669"/>
    <property type="project" value="UniProtKB-SubCell"/>
</dbReference>
<dbReference type="GO" id="GO:0005179">
    <property type="term" value="F:hormone activity"/>
    <property type="evidence" value="ECO:0007669"/>
    <property type="project" value="UniProtKB-KW"/>
</dbReference>
<dbReference type="GO" id="GO:0006915">
    <property type="term" value="P:apoptotic process"/>
    <property type="evidence" value="ECO:0000315"/>
    <property type="project" value="MGI"/>
</dbReference>
<dbReference type="GO" id="GO:0035234">
    <property type="term" value="P:ectopic germ cell programmed cell death"/>
    <property type="evidence" value="ECO:0000315"/>
    <property type="project" value="MGI"/>
</dbReference>
<dbReference type="GO" id="GO:0009566">
    <property type="term" value="P:fertilization"/>
    <property type="evidence" value="ECO:0000315"/>
    <property type="project" value="MGI"/>
</dbReference>
<dbReference type="GO" id="GO:0030317">
    <property type="term" value="P:flagellated sperm motility"/>
    <property type="evidence" value="ECO:0000315"/>
    <property type="project" value="MGI"/>
</dbReference>
<dbReference type="GO" id="GO:0008584">
    <property type="term" value="P:male gonad development"/>
    <property type="evidence" value="ECO:0000315"/>
    <property type="project" value="MGI"/>
</dbReference>
<dbReference type="GO" id="GO:0043066">
    <property type="term" value="P:negative regulation of apoptotic process"/>
    <property type="evidence" value="ECO:0000315"/>
    <property type="project" value="MGI"/>
</dbReference>
<dbReference type="GO" id="GO:0051093">
    <property type="term" value="P:negative regulation of developmental process"/>
    <property type="evidence" value="ECO:0000315"/>
    <property type="project" value="MGI"/>
</dbReference>
<dbReference type="GO" id="GO:2000242">
    <property type="term" value="P:negative regulation of reproductive process"/>
    <property type="evidence" value="ECO:0000315"/>
    <property type="project" value="MGI"/>
</dbReference>
<dbReference type="GO" id="GO:0007286">
    <property type="term" value="P:spermatid development"/>
    <property type="evidence" value="ECO:0000315"/>
    <property type="project" value="MGI"/>
</dbReference>
<dbReference type="GO" id="GO:0007283">
    <property type="term" value="P:spermatogenesis"/>
    <property type="evidence" value="ECO:0000315"/>
    <property type="project" value="MGI"/>
</dbReference>
<dbReference type="CDD" id="cd00101">
    <property type="entry name" value="IlGF_like"/>
    <property type="match status" value="1"/>
</dbReference>
<dbReference type="CDD" id="cd04365">
    <property type="entry name" value="IlGF_relaxin_like"/>
    <property type="match status" value="1"/>
</dbReference>
<dbReference type="Gene3D" id="1.10.100.10">
    <property type="entry name" value="Insulin-like"/>
    <property type="match status" value="1"/>
</dbReference>
<dbReference type="InterPro" id="IPR016179">
    <property type="entry name" value="Insulin-like"/>
</dbReference>
<dbReference type="InterPro" id="IPR017100">
    <property type="entry name" value="Insulin-like_pep_6"/>
</dbReference>
<dbReference type="InterPro" id="IPR036438">
    <property type="entry name" value="Insulin-like_sf"/>
</dbReference>
<dbReference type="InterPro" id="IPR022353">
    <property type="entry name" value="Insulin_CS"/>
</dbReference>
<dbReference type="InterPro" id="IPR051042">
    <property type="entry name" value="Repro_Hormone_Insulin-like"/>
</dbReference>
<dbReference type="PANTHER" id="PTHR12004:SF1">
    <property type="entry name" value="INSULIN-LIKE PEPTIDE INSL6"/>
    <property type="match status" value="1"/>
</dbReference>
<dbReference type="PANTHER" id="PTHR12004">
    <property type="entry name" value="RELAXIN"/>
    <property type="match status" value="1"/>
</dbReference>
<dbReference type="Pfam" id="PF00049">
    <property type="entry name" value="Insulin"/>
    <property type="match status" value="1"/>
</dbReference>
<dbReference type="PIRSF" id="PIRSF037062">
    <property type="entry name" value="Insulin-like_peptide_6"/>
    <property type="match status" value="1"/>
</dbReference>
<dbReference type="SMART" id="SM00078">
    <property type="entry name" value="IlGF"/>
    <property type="match status" value="1"/>
</dbReference>
<dbReference type="SUPFAM" id="SSF56994">
    <property type="entry name" value="Insulin-like"/>
    <property type="match status" value="1"/>
</dbReference>
<dbReference type="PROSITE" id="PS00262">
    <property type="entry name" value="INSULIN"/>
    <property type="match status" value="1"/>
</dbReference>
<proteinExistence type="evidence at transcript level"/>
<name>INSL6_MOUSE</name>
<evidence type="ECO:0000250" key="1"/>
<evidence type="ECO:0000255" key="2"/>
<evidence type="ECO:0000305" key="3"/>